<accession>A0A0H2WZQ7</accession>
<reference key="1">
    <citation type="journal article" date="2005" name="J. Bacteriol.">
        <title>Insights on evolution of virulence and resistance from the complete genome analysis of an early methicillin-resistant Staphylococcus aureus strain and a biofilm-producing methicillin-resistant Staphylococcus epidermidis strain.</title>
        <authorList>
            <person name="Gill S.R."/>
            <person name="Fouts D.E."/>
            <person name="Archer G.L."/>
            <person name="Mongodin E.F."/>
            <person name="DeBoy R.T."/>
            <person name="Ravel J."/>
            <person name="Paulsen I.T."/>
            <person name="Kolonay J.F."/>
            <person name="Brinkac L.M."/>
            <person name="Beanan M.J."/>
            <person name="Dodson R.J."/>
            <person name="Daugherty S.C."/>
            <person name="Madupu R."/>
            <person name="Angiuoli S.V."/>
            <person name="Durkin A.S."/>
            <person name="Haft D.H."/>
            <person name="Vamathevan J.J."/>
            <person name="Khouri H."/>
            <person name="Utterback T.R."/>
            <person name="Lee C."/>
            <person name="Dimitrov G."/>
            <person name="Jiang L."/>
            <person name="Qin H."/>
            <person name="Weidman J."/>
            <person name="Tran K."/>
            <person name="Kang K.H."/>
            <person name="Hance I.R."/>
            <person name="Nelson K.E."/>
            <person name="Fraser C.M."/>
        </authorList>
    </citation>
    <scope>NUCLEOTIDE SEQUENCE [LARGE SCALE GENOMIC DNA]</scope>
    <source>
        <strain>COL</strain>
    </source>
</reference>
<reference key="2">
    <citation type="journal article" date="2012" name="PLoS Pathog.">
        <title>Identification of genetic determinants and enzymes involved with the amidation of glutamic acid residues in the peptidoglycan of Staphylococcus aureus.</title>
        <authorList>
            <person name="Figueiredo T.A."/>
            <person name="Sobral R.G."/>
            <person name="Ludovice A.M."/>
            <person name="Almeida J.M."/>
            <person name="Bui N.K."/>
            <person name="Vollmer W."/>
            <person name="de Lencastre H."/>
            <person name="Tomasz A."/>
        </authorList>
    </citation>
    <scope>FUNCTION</scope>
    <scope>PATHWAY</scope>
    <scope>DISRUPTION PHENOTYPE</scope>
    <source>
        <strain>COL</strain>
    </source>
</reference>
<reference key="3">
    <citation type="journal article" date="2018" name="Sci. Rep.">
        <title>First insights of peptidoglycan amidation in Gram-positive bacteria - the high-resolution crystal structure of Staphylococcus aureus glutamine amidotransferase GatD.</title>
        <authorList>
            <person name="Leisico F."/>
            <person name="Vieira D.V."/>
            <person name="Figueiredo T.A."/>
            <person name="Silva M."/>
            <person name="Cabrita E.J."/>
            <person name="Sobral R.G."/>
            <person name="Ludovice A.M."/>
            <person name="Trincao J."/>
            <person name="Romao M.J."/>
            <person name="de Lencastre H."/>
            <person name="Santos-Silva T."/>
        </authorList>
    </citation>
    <scope>SUBUNIT</scope>
    <source>
        <strain>COL</strain>
    </source>
</reference>
<proteinExistence type="evidence at protein level"/>
<keyword id="KW-0002">3D-structure</keyword>
<keyword id="KW-0067">ATP-binding</keyword>
<keyword id="KW-0133">Cell shape</keyword>
<keyword id="KW-0961">Cell wall biogenesis/degradation</keyword>
<keyword id="KW-0436">Ligase</keyword>
<keyword id="KW-0479">Metal-binding</keyword>
<keyword id="KW-0547">Nucleotide-binding</keyword>
<keyword id="KW-0573">Peptidoglycan synthesis</keyword>
<keyword id="KW-0862">Zinc</keyword>
<feature type="chain" id="PRO_0000446943" description="Lipid II isoglutaminyl synthase (glutamine-hydrolyzing) subunit MurT">
    <location>
        <begin position="1"/>
        <end position="437"/>
    </location>
</feature>
<feature type="active site" evidence="1 2">
    <location>
        <position position="349"/>
    </location>
</feature>
<feature type="binding site" evidence="1 2">
    <location>
        <position position="202"/>
    </location>
    <ligand>
        <name>Zn(2+)</name>
        <dbReference type="ChEBI" id="CHEBI:29105"/>
    </ligand>
</feature>
<feature type="binding site" evidence="1 2">
    <location>
        <position position="205"/>
    </location>
    <ligand>
        <name>Zn(2+)</name>
        <dbReference type="ChEBI" id="CHEBI:29105"/>
    </ligand>
</feature>
<feature type="binding site" evidence="1 2">
    <location>
        <position position="224"/>
    </location>
    <ligand>
        <name>Zn(2+)</name>
        <dbReference type="ChEBI" id="CHEBI:29105"/>
    </ligand>
</feature>
<feature type="binding site" evidence="1 2">
    <location>
        <position position="226"/>
    </location>
    <ligand>
        <name>Zn(2+)</name>
        <dbReference type="ChEBI" id="CHEBI:29105"/>
    </ligand>
</feature>
<feature type="helix" evidence="8">
    <location>
        <begin position="41"/>
        <end position="46"/>
    </location>
</feature>
<feature type="strand" evidence="8">
    <location>
        <begin position="48"/>
        <end position="57"/>
    </location>
</feature>
<feature type="helix" evidence="8">
    <location>
        <begin position="59"/>
        <end position="72"/>
    </location>
</feature>
<feature type="strand" evidence="8">
    <location>
        <begin position="77"/>
        <end position="79"/>
    </location>
</feature>
<feature type="helix" evidence="8">
    <location>
        <begin position="87"/>
        <end position="97"/>
    </location>
</feature>
<feature type="strand" evidence="8">
    <location>
        <begin position="104"/>
        <end position="108"/>
    </location>
</feature>
<feature type="helix" evidence="8">
    <location>
        <begin position="111"/>
        <end position="113"/>
    </location>
</feature>
<feature type="helix" evidence="8">
    <location>
        <begin position="114"/>
        <end position="118"/>
    </location>
</feature>
<feature type="strand" evidence="8">
    <location>
        <begin position="124"/>
        <end position="128"/>
    </location>
</feature>
<feature type="helix" evidence="8">
    <location>
        <begin position="141"/>
        <end position="153"/>
    </location>
</feature>
<feature type="strand" evidence="8">
    <location>
        <begin position="159"/>
        <end position="163"/>
    </location>
</feature>
<feature type="helix" evidence="8">
    <location>
        <begin position="167"/>
        <end position="170"/>
    </location>
</feature>
<feature type="helix" evidence="8">
    <location>
        <begin position="171"/>
        <end position="175"/>
    </location>
</feature>
<feature type="strand" evidence="8">
    <location>
        <begin position="179"/>
        <end position="184"/>
    </location>
</feature>
<feature type="turn" evidence="8">
    <location>
        <begin position="203"/>
        <end position="205"/>
    </location>
</feature>
<feature type="strand" evidence="8">
    <location>
        <begin position="211"/>
        <end position="216"/>
    </location>
</feature>
<feature type="strand" evidence="8">
    <location>
        <begin position="219"/>
        <end position="223"/>
    </location>
</feature>
<feature type="strand" evidence="8">
    <location>
        <begin position="234"/>
        <end position="252"/>
    </location>
</feature>
<feature type="strand" evidence="8">
    <location>
        <begin position="254"/>
        <end position="256"/>
    </location>
</feature>
<feature type="helix" evidence="8">
    <location>
        <begin position="264"/>
        <end position="277"/>
    </location>
</feature>
<feature type="helix" evidence="8">
    <location>
        <begin position="282"/>
        <end position="289"/>
    </location>
</feature>
<feature type="strand" evidence="8">
    <location>
        <begin position="295"/>
        <end position="304"/>
    </location>
</feature>
<feature type="strand" evidence="8">
    <location>
        <begin position="307"/>
        <end position="311"/>
    </location>
</feature>
<feature type="helix" evidence="8">
    <location>
        <begin position="317"/>
        <end position="328"/>
    </location>
</feature>
<feature type="strand" evidence="8">
    <location>
        <begin position="330"/>
        <end position="332"/>
    </location>
</feature>
<feature type="strand" evidence="8">
    <location>
        <begin position="334"/>
        <end position="339"/>
    </location>
</feature>
<feature type="turn" evidence="8">
    <location>
        <begin position="344"/>
        <end position="346"/>
    </location>
</feature>
<feature type="helix" evidence="8">
    <location>
        <begin position="351"/>
        <end position="354"/>
    </location>
</feature>
<feature type="helix" evidence="8">
    <location>
        <begin position="358"/>
        <end position="363"/>
    </location>
</feature>
<feature type="strand" evidence="8">
    <location>
        <begin position="366"/>
        <end position="373"/>
    </location>
</feature>
<feature type="helix" evidence="8">
    <location>
        <begin position="376"/>
        <end position="385"/>
    </location>
</feature>
<feature type="strand" evidence="8">
    <location>
        <begin position="392"/>
        <end position="394"/>
    </location>
</feature>
<feature type="helix" evidence="8">
    <location>
        <begin position="398"/>
        <end position="403"/>
    </location>
</feature>
<feature type="helix" evidence="8">
    <location>
        <begin position="404"/>
        <end position="407"/>
    </location>
</feature>
<feature type="strand" evidence="8">
    <location>
        <begin position="408"/>
        <end position="415"/>
    </location>
</feature>
<feature type="helix" evidence="8">
    <location>
        <begin position="418"/>
        <end position="431"/>
    </location>
</feature>
<name>MURT_STAAC</name>
<dbReference type="EC" id="6.3.5.13" evidence="1 2"/>
<dbReference type="EMBL" id="CP000046">
    <property type="protein sequence ID" value="AAW38392.1"/>
    <property type="molecule type" value="Genomic_DNA"/>
</dbReference>
<dbReference type="RefSeq" id="WP_001250336.1">
    <property type="nucleotide sequence ID" value="NZ_JBGOFO010000006.1"/>
</dbReference>
<dbReference type="PDB" id="7Q8E">
    <property type="method" value="X-ray"/>
    <property type="resolution" value="2.90 A"/>
    <property type="chains" value="A/C=1-437"/>
</dbReference>
<dbReference type="PDBsum" id="7Q8E"/>
<dbReference type="SASBDB" id="A0A0H2WZQ7"/>
<dbReference type="SMR" id="A0A0H2WZQ7"/>
<dbReference type="KEGG" id="sac:SACOL1951"/>
<dbReference type="HOGENOM" id="CLU_041534_0_0_9"/>
<dbReference type="BRENDA" id="6.3.5.13">
    <property type="organism ID" value="3352"/>
</dbReference>
<dbReference type="UniPathway" id="UPA00219"/>
<dbReference type="Proteomes" id="UP000000530">
    <property type="component" value="Chromosome"/>
</dbReference>
<dbReference type="GO" id="GO:0016881">
    <property type="term" value="F:acid-amino acid ligase activity"/>
    <property type="evidence" value="ECO:0007669"/>
    <property type="project" value="InterPro"/>
</dbReference>
<dbReference type="GO" id="GO:0005524">
    <property type="term" value="F:ATP binding"/>
    <property type="evidence" value="ECO:0007669"/>
    <property type="project" value="UniProtKB-UniRule"/>
</dbReference>
<dbReference type="GO" id="GO:0140282">
    <property type="term" value="F:carbon-nitrogen ligase activity on lipid II"/>
    <property type="evidence" value="ECO:0007669"/>
    <property type="project" value="UniProtKB-UniRule"/>
</dbReference>
<dbReference type="GO" id="GO:0008270">
    <property type="term" value="F:zinc ion binding"/>
    <property type="evidence" value="ECO:0007669"/>
    <property type="project" value="UniProtKB-UniRule"/>
</dbReference>
<dbReference type="GO" id="GO:0071555">
    <property type="term" value="P:cell wall organization"/>
    <property type="evidence" value="ECO:0007669"/>
    <property type="project" value="UniProtKB-KW"/>
</dbReference>
<dbReference type="GO" id="GO:0009252">
    <property type="term" value="P:peptidoglycan biosynthetic process"/>
    <property type="evidence" value="ECO:0007669"/>
    <property type="project" value="UniProtKB-UniRule"/>
</dbReference>
<dbReference type="GO" id="GO:0008360">
    <property type="term" value="P:regulation of cell shape"/>
    <property type="evidence" value="ECO:0007669"/>
    <property type="project" value="UniProtKB-KW"/>
</dbReference>
<dbReference type="Gene3D" id="3.40.1190.10">
    <property type="entry name" value="Mur-like, catalytic domain"/>
    <property type="match status" value="1"/>
</dbReference>
<dbReference type="HAMAP" id="MF_02214">
    <property type="entry name" value="Lipid_II_synth_MurT"/>
    <property type="match status" value="1"/>
</dbReference>
<dbReference type="InterPro" id="IPR043703">
    <property type="entry name" value="Lipid_II_synth_MurT"/>
</dbReference>
<dbReference type="InterPro" id="IPR036565">
    <property type="entry name" value="Mur-like_cat_sf"/>
</dbReference>
<dbReference type="InterPro" id="IPR013221">
    <property type="entry name" value="Mur_ligase_cen"/>
</dbReference>
<dbReference type="InterPro" id="IPR013564">
    <property type="entry name" value="MurT_C"/>
</dbReference>
<dbReference type="PANTHER" id="PTHR23135:SF7">
    <property type="entry name" value="LIPID II ISOGLUTAMINYL SYNTHASE (GLUTAMINE-HYDROLYZING) SUBUNIT MURT"/>
    <property type="match status" value="1"/>
</dbReference>
<dbReference type="PANTHER" id="PTHR23135">
    <property type="entry name" value="MUR LIGASE FAMILY MEMBER"/>
    <property type="match status" value="1"/>
</dbReference>
<dbReference type="Pfam" id="PF08245">
    <property type="entry name" value="Mur_ligase_M"/>
    <property type="match status" value="1"/>
</dbReference>
<dbReference type="Pfam" id="PF08353">
    <property type="entry name" value="MurT_C"/>
    <property type="match status" value="1"/>
</dbReference>
<dbReference type="SUPFAM" id="SSF53623">
    <property type="entry name" value="MurD-like peptide ligases, catalytic domain"/>
    <property type="match status" value="1"/>
</dbReference>
<protein>
    <recommendedName>
        <fullName evidence="2 6">Lipid II isoglutaminyl synthase (glutamine-hydrolyzing) subunit MurT</fullName>
        <ecNumber evidence="1 2">6.3.5.13</ecNumber>
    </recommendedName>
</protein>
<sequence>MRQWTAIHLAKLARKASRAVGKRGTDLPGQIARKVDTDILRKLAEQVDDIVFISGTNGKTTTSNLIGHTLKANNIQIIHNNEGANMAAGITSAFIMQSTPKTKIAVIEIDEGSIPRVLKEVTPSMMVFTNFFRDQMDRFGEIDIMVNNIAETISNKGIKLLLNADDPFVSRLKIASDTIVYYGMKAHAHEFEQSTMNESRYCPNCGRLLQYDYIHYNQIGHYHCQCGFKREQAKYEISSFDVAPFLYLNINDEKYDMKIAGDFNAYNALAAYTVLRELGLNEQTIKNGFETYTSDNGRMQYFKKERKEAMINLAKNPAGMNASLSVGEQLEGEKVYVISLNDNAADGRDTSWIYDADFEKLSKQQIEAIIVTGTRAEELQLRLKLAEVEVPIIVERDIYKATAKTMDYKGFTVAIPNYTSLAPMLEQLNRSFEGGQS</sequence>
<organism>
    <name type="scientific">Staphylococcus aureus (strain COL)</name>
    <dbReference type="NCBI Taxonomy" id="93062"/>
    <lineage>
        <taxon>Bacteria</taxon>
        <taxon>Bacillati</taxon>
        <taxon>Bacillota</taxon>
        <taxon>Bacilli</taxon>
        <taxon>Bacillales</taxon>
        <taxon>Staphylococcaceae</taxon>
        <taxon>Staphylococcus</taxon>
    </lineage>
</organism>
<gene>
    <name evidence="2 5" type="primary">murT</name>
    <name evidence="7" type="ordered locus">SACOL1951</name>
</gene>
<evidence type="ECO:0000250" key="1">
    <source>
        <dbReference type="UniProtKB" id="A0A0H3JUU7"/>
    </source>
</evidence>
<evidence type="ECO:0000255" key="2">
    <source>
        <dbReference type="HAMAP-Rule" id="MF_02214"/>
    </source>
</evidence>
<evidence type="ECO:0000269" key="3">
    <source>
    </source>
</evidence>
<evidence type="ECO:0000269" key="4">
    <source>
    </source>
</evidence>
<evidence type="ECO:0000303" key="5">
    <source>
    </source>
</evidence>
<evidence type="ECO:0000305" key="6"/>
<evidence type="ECO:0000312" key="7">
    <source>
        <dbReference type="EMBL" id="AAW38392.1"/>
    </source>
</evidence>
<evidence type="ECO:0007829" key="8">
    <source>
        <dbReference type="PDB" id="7Q8E"/>
    </source>
</evidence>
<comment type="function">
    <text evidence="1 3">The lipid II isoglutaminyl synthase complex catalyzes the formation of alpha-D-isoglutamine in the cell wall lipid II stem peptide (PubMed:22303291). The MurT subunit catalyzes the ATP-dependent amidation of D-glutamate residue of lipid II, converting it to an isoglutamine residue (By similarity).</text>
</comment>
<comment type="catalytic activity">
    <reaction evidence="1 2">
        <text>beta-D-GlcNAc-(1-&gt;4)-Mur2Ac(oyl-L-Ala-gamma-D-Glu-L-Lys-D-Ala-D-Ala)-di-trans,octa-cis-undecaprenyl diphosphate + L-glutamine + ATP + H2O = beta-D-GlcNAc-(1-&gt;4)-Mur2Ac(oyl-L-Ala-D-isoglutaminyl-L-Lys-D-Ala-D-Ala)-di-trans,octa-cis-undecaprenyl diphosphate + L-glutamate + ADP + phosphate + H(+)</text>
        <dbReference type="Rhea" id="RHEA:57928"/>
        <dbReference type="ChEBI" id="CHEBI:15377"/>
        <dbReference type="ChEBI" id="CHEBI:15378"/>
        <dbReference type="ChEBI" id="CHEBI:29985"/>
        <dbReference type="ChEBI" id="CHEBI:30616"/>
        <dbReference type="ChEBI" id="CHEBI:43474"/>
        <dbReference type="ChEBI" id="CHEBI:58359"/>
        <dbReference type="ChEBI" id="CHEBI:60033"/>
        <dbReference type="ChEBI" id="CHEBI:62233"/>
        <dbReference type="ChEBI" id="CHEBI:456216"/>
        <dbReference type="EC" id="6.3.5.13"/>
    </reaction>
</comment>
<comment type="catalytic activity">
    <reaction evidence="1 2">
        <text>beta-D-GlcNAc-(1-&gt;4)-Mur2Ac(oyl-L-Ala-gamma-D-Glu-L-Lys-D-Ala-D-Ala)-di-trans,octa-cis-undecaprenyl diphosphate + ATP = beta-D-GlcNAc-(1-&gt;4)-Mur2Ac(oyl-L-Ala-gamma-D-O-P-Glu-L-Lys-D-Ala-D-Ala)-di-trans,octa-cis-undecaprenyl diphosphate + ADP</text>
        <dbReference type="Rhea" id="RHEA:59488"/>
        <dbReference type="ChEBI" id="CHEBI:30616"/>
        <dbReference type="ChEBI" id="CHEBI:60033"/>
        <dbReference type="ChEBI" id="CHEBI:143132"/>
        <dbReference type="ChEBI" id="CHEBI:456216"/>
    </reaction>
</comment>
<comment type="catalytic activity">
    <reaction evidence="1 2">
        <text>beta-D-GlcNAc-(1-&gt;4)-Mur2Ac(oyl-L-Ala-gamma-D-O-P-Glu-L-Lys-D-Ala-D-Ala)-di-trans,octa-cis-undecaprenyl diphosphate + NH4(+) = beta-D-GlcNAc-(1-&gt;4)-Mur2Ac(oyl-L-Ala-D-isoglutaminyl-L-Lys-D-Ala-D-Ala)-di-trans,octa-cis-undecaprenyl diphosphate + phosphate + H(+)</text>
        <dbReference type="Rhea" id="RHEA:57932"/>
        <dbReference type="ChEBI" id="CHEBI:15378"/>
        <dbReference type="ChEBI" id="CHEBI:28938"/>
        <dbReference type="ChEBI" id="CHEBI:43474"/>
        <dbReference type="ChEBI" id="CHEBI:62233"/>
        <dbReference type="ChEBI" id="CHEBI:143132"/>
    </reaction>
</comment>
<comment type="pathway">
    <text evidence="2 3">Cell wall biogenesis; peptidoglycan biosynthesis.</text>
</comment>
<comment type="subunit">
    <text evidence="2 4">Forms a heterodimer with GatD.</text>
</comment>
<comment type="disruption phenotype">
    <text evidence="3">The gatD-murT double mutant shows abnormal peptidoglycan composition, with decreased amidation of the glutamate residue. The mutant has a normal morphology but growth rate is greatly reduced. Mutant shows reduced antibiotic resistance and increased sensitivity to lysozyme.</text>
</comment>
<comment type="similarity">
    <text evidence="2 6">Belongs to the MurCDEF family. MurT subfamily.</text>
</comment>